<comment type="subcellular location">
    <subcellularLocation>
        <location evidence="1">Cytoplasm</location>
    </subcellularLocation>
</comment>
<comment type="similarity">
    <text evidence="1">Belongs to the TACO1 family.</text>
</comment>
<dbReference type="EMBL" id="CT971583">
    <property type="protein sequence ID" value="CAK24398.1"/>
    <property type="molecule type" value="Genomic_DNA"/>
</dbReference>
<dbReference type="SMR" id="A5GN83"/>
<dbReference type="STRING" id="32051.SynWH7803_1972"/>
<dbReference type="KEGG" id="syx:SynWH7803_1972"/>
<dbReference type="eggNOG" id="COG0217">
    <property type="taxonomic scope" value="Bacteria"/>
</dbReference>
<dbReference type="HOGENOM" id="CLU_062974_2_2_3"/>
<dbReference type="OrthoDB" id="9781053at2"/>
<dbReference type="Proteomes" id="UP000001566">
    <property type="component" value="Chromosome"/>
</dbReference>
<dbReference type="GO" id="GO:0005829">
    <property type="term" value="C:cytosol"/>
    <property type="evidence" value="ECO:0007669"/>
    <property type="project" value="TreeGrafter"/>
</dbReference>
<dbReference type="GO" id="GO:0003677">
    <property type="term" value="F:DNA binding"/>
    <property type="evidence" value="ECO:0007669"/>
    <property type="project" value="UniProtKB-UniRule"/>
</dbReference>
<dbReference type="GO" id="GO:0006355">
    <property type="term" value="P:regulation of DNA-templated transcription"/>
    <property type="evidence" value="ECO:0007669"/>
    <property type="project" value="UniProtKB-UniRule"/>
</dbReference>
<dbReference type="FunFam" id="1.10.10.200:FF:000002">
    <property type="entry name" value="Probable transcriptional regulatory protein CLM62_37755"/>
    <property type="match status" value="1"/>
</dbReference>
<dbReference type="Gene3D" id="1.10.10.200">
    <property type="match status" value="1"/>
</dbReference>
<dbReference type="Gene3D" id="3.30.70.980">
    <property type="match status" value="2"/>
</dbReference>
<dbReference type="HAMAP" id="MF_00693">
    <property type="entry name" value="Transcrip_reg_TACO1"/>
    <property type="match status" value="1"/>
</dbReference>
<dbReference type="InterPro" id="IPR017856">
    <property type="entry name" value="Integrase-like_N"/>
</dbReference>
<dbReference type="InterPro" id="IPR048300">
    <property type="entry name" value="TACO1_YebC-like_2nd/3rd_dom"/>
</dbReference>
<dbReference type="InterPro" id="IPR049083">
    <property type="entry name" value="TACO1_YebC_N"/>
</dbReference>
<dbReference type="InterPro" id="IPR002876">
    <property type="entry name" value="Transcrip_reg_TACO1-like"/>
</dbReference>
<dbReference type="InterPro" id="IPR026564">
    <property type="entry name" value="Transcrip_reg_TACO1-like_dom3"/>
</dbReference>
<dbReference type="InterPro" id="IPR029072">
    <property type="entry name" value="YebC-like"/>
</dbReference>
<dbReference type="NCBIfam" id="NF001030">
    <property type="entry name" value="PRK00110.1"/>
    <property type="match status" value="1"/>
</dbReference>
<dbReference type="NCBIfam" id="NF009044">
    <property type="entry name" value="PRK12378.1"/>
    <property type="match status" value="1"/>
</dbReference>
<dbReference type="NCBIfam" id="TIGR01033">
    <property type="entry name" value="YebC/PmpR family DNA-binding transcriptional regulator"/>
    <property type="match status" value="1"/>
</dbReference>
<dbReference type="PANTHER" id="PTHR12532:SF6">
    <property type="entry name" value="TRANSCRIPTIONAL REGULATORY PROTEIN YEBC-RELATED"/>
    <property type="match status" value="1"/>
</dbReference>
<dbReference type="PANTHER" id="PTHR12532">
    <property type="entry name" value="TRANSLATIONAL ACTIVATOR OF CYTOCHROME C OXIDASE 1"/>
    <property type="match status" value="1"/>
</dbReference>
<dbReference type="Pfam" id="PF20772">
    <property type="entry name" value="TACO1_YebC_N"/>
    <property type="match status" value="1"/>
</dbReference>
<dbReference type="Pfam" id="PF01709">
    <property type="entry name" value="Transcrip_reg"/>
    <property type="match status" value="1"/>
</dbReference>
<dbReference type="SUPFAM" id="SSF75625">
    <property type="entry name" value="YebC-like"/>
    <property type="match status" value="1"/>
</dbReference>
<proteinExistence type="inferred from homology"/>
<reference key="1">
    <citation type="submission" date="2006-05" db="EMBL/GenBank/DDBJ databases">
        <authorList>
            <consortium name="Genoscope"/>
        </authorList>
    </citation>
    <scope>NUCLEOTIDE SEQUENCE [LARGE SCALE GENOMIC DNA]</scope>
    <source>
        <strain>WH7803</strain>
    </source>
</reference>
<sequence>MAGHSKWSQIKRTKAVVDAKRGAVFTRIGREITVAARQGADPDGNFQLRTAIAKAKAAGVPAGNIERAIAKGSGQGGEAIKLESIRYEGYGPGGVAVLVEALSDNRNRTAAELRLAFSKHGGNLGESGCVSYLFQHRSEVRIEADAEREEALLESLLSLEADGYELGDDGQALVHGPYEVLESLQNGLRQQSWQVQEWTHAWHPLTQVVPQDPDTTRQCLKLLEALEDLDDVNSISTNLEIDDAFVP</sequence>
<keyword id="KW-0963">Cytoplasm</keyword>
<keyword id="KW-0238">DNA-binding</keyword>
<keyword id="KW-1185">Reference proteome</keyword>
<keyword id="KW-0804">Transcription</keyword>
<keyword id="KW-0805">Transcription regulation</keyword>
<organism>
    <name type="scientific">Synechococcus sp. (strain WH7803)</name>
    <dbReference type="NCBI Taxonomy" id="32051"/>
    <lineage>
        <taxon>Bacteria</taxon>
        <taxon>Bacillati</taxon>
        <taxon>Cyanobacteriota</taxon>
        <taxon>Cyanophyceae</taxon>
        <taxon>Synechococcales</taxon>
        <taxon>Synechococcaceae</taxon>
        <taxon>Synechococcus</taxon>
    </lineage>
</organism>
<gene>
    <name type="ordered locus">SynWH7803_1972</name>
</gene>
<accession>A5GN83</accession>
<protein>
    <recommendedName>
        <fullName evidence="1">Probable transcriptional regulatory protein SynWH7803_1972</fullName>
    </recommendedName>
</protein>
<evidence type="ECO:0000255" key="1">
    <source>
        <dbReference type="HAMAP-Rule" id="MF_00693"/>
    </source>
</evidence>
<name>Y1972_SYNPW</name>
<feature type="chain" id="PRO_1000045383" description="Probable transcriptional regulatory protein SynWH7803_1972">
    <location>
        <begin position="1"/>
        <end position="247"/>
    </location>
</feature>